<proteinExistence type="evidence at transcript level"/>
<protein>
    <recommendedName>
        <fullName>Probable outer membrane protein pmp2</fullName>
    </recommendedName>
    <alternativeName>
        <fullName>Outer membrane protein 7</fullName>
    </alternativeName>
    <alternativeName>
        <fullName>Polymorphic membrane protein 2</fullName>
    </alternativeName>
</protein>
<dbReference type="EMBL" id="AJ133035">
    <property type="protein sequence ID" value="CAB37083.1"/>
    <property type="molecule type" value="Genomic_DNA"/>
</dbReference>
<dbReference type="EMBL" id="AE001363">
    <property type="protein sequence ID" value="AAD18172.1"/>
    <property type="molecule type" value="Genomic_DNA"/>
</dbReference>
<dbReference type="EMBL" id="AE002161">
    <property type="protein sequence ID" value="AAF38561.1"/>
    <property type="molecule type" value="Genomic_DNA"/>
</dbReference>
<dbReference type="EMBL" id="BA000008">
    <property type="protein sequence ID" value="BAA98223.1"/>
    <property type="status" value="ALT_FRAME"/>
    <property type="molecule type" value="Genomic_DNA"/>
</dbReference>
<dbReference type="EMBL" id="AE009440">
    <property type="protein sequence ID" value="AAP97948.1"/>
    <property type="status" value="ALT_FRAME"/>
    <property type="molecule type" value="Genomic_DNA"/>
</dbReference>
<dbReference type="EMBL" id="AE009440">
    <property type="protein sequence ID" value="AAP97949.1"/>
    <property type="status" value="ALT_FRAME"/>
    <property type="molecule type" value="Genomic_DNA"/>
</dbReference>
<dbReference type="PIR" id="E72130">
    <property type="entry name" value="E72130"/>
</dbReference>
<dbReference type="PIR" id="E86492">
    <property type="entry name" value="E86492"/>
</dbReference>
<dbReference type="RefSeq" id="NP_224227.1">
    <property type="nucleotide sequence ID" value="NC_000922.1"/>
</dbReference>
<dbReference type="RefSeq" id="WP_010882669.1">
    <property type="nucleotide sequence ID" value="NZ_LN846996.1"/>
</dbReference>
<dbReference type="RefSeq" id="WP_010895261.1">
    <property type="nucleotide sequence ID" value="NZ_LN847257.1"/>
</dbReference>
<dbReference type="RefSeq" id="WP_011126042.1">
    <property type="nucleotide sequence ID" value="NZ_LN847257.1"/>
</dbReference>
<dbReference type="STRING" id="406984.CPK_ORF00514"/>
<dbReference type="KEGG" id="cpa:CP_0761"/>
<dbReference type="KEGG" id="cpj:pmp_2_1"/>
<dbReference type="KEGG" id="cpn:CPn_0013"/>
<dbReference type="KEGG" id="cpt:CpB0015"/>
<dbReference type="KEGG" id="cpt:CpB0016"/>
<dbReference type="PATRIC" id="fig|115713.3.peg.18"/>
<dbReference type="eggNOG" id="COG4625">
    <property type="taxonomic scope" value="Bacteria"/>
</dbReference>
<dbReference type="HOGENOM" id="CLU_004549_1_1_0"/>
<dbReference type="OrthoDB" id="17989at2"/>
<dbReference type="Proteomes" id="UP000000583">
    <property type="component" value="Chromosome"/>
</dbReference>
<dbReference type="Proteomes" id="UP000000801">
    <property type="component" value="Chromosome"/>
</dbReference>
<dbReference type="GO" id="GO:0009279">
    <property type="term" value="C:cell outer membrane"/>
    <property type="evidence" value="ECO:0007669"/>
    <property type="project" value="UniProtKB-SubCell"/>
</dbReference>
<dbReference type="GO" id="GO:0005576">
    <property type="term" value="C:extracellular region"/>
    <property type="evidence" value="ECO:0007669"/>
    <property type="project" value="UniProtKB-KW"/>
</dbReference>
<dbReference type="Gene3D" id="2.40.128.130">
    <property type="entry name" value="Autotransporter beta-domain"/>
    <property type="match status" value="1"/>
</dbReference>
<dbReference type="InterPro" id="IPR005546">
    <property type="entry name" value="Autotransporte_beta"/>
</dbReference>
<dbReference type="InterPro" id="IPR036709">
    <property type="entry name" value="Autotransporte_beta_dom_sf"/>
</dbReference>
<dbReference type="InterPro" id="IPR011427">
    <property type="entry name" value="Polymorphic_membr_middle"/>
</dbReference>
<dbReference type="InterPro" id="IPR003368">
    <property type="entry name" value="POMP_repeat"/>
</dbReference>
<dbReference type="NCBIfam" id="TIGR01376">
    <property type="entry name" value="POMP_repeat"/>
    <property type="match status" value="2"/>
</dbReference>
<dbReference type="Pfam" id="PF03797">
    <property type="entry name" value="Autotransporter"/>
    <property type="match status" value="1"/>
</dbReference>
<dbReference type="Pfam" id="PF02415">
    <property type="entry name" value="Chlam_PMP"/>
    <property type="match status" value="2"/>
</dbReference>
<dbReference type="Pfam" id="PF07548">
    <property type="entry name" value="ChlamPMP_M"/>
    <property type="match status" value="1"/>
</dbReference>
<dbReference type="SMART" id="SM00869">
    <property type="entry name" value="Autotransporter"/>
    <property type="match status" value="1"/>
</dbReference>
<dbReference type="SUPFAM" id="SSF103515">
    <property type="entry name" value="Autotransporter"/>
    <property type="match status" value="1"/>
</dbReference>
<dbReference type="PROSITE" id="PS51208">
    <property type="entry name" value="AUTOTRANSPORTER"/>
    <property type="match status" value="1"/>
</dbReference>
<comment type="subcellular location">
    <subcellularLocation>
        <location>Secreted</location>
        <location>Cell wall</location>
    </subcellularLocation>
    <subcellularLocation>
        <location evidence="3">Cell outer membrane</location>
        <topology evidence="3">Peripheral membrane protein</topology>
        <orientation evidence="3">Extracellular side</orientation>
    </subcellularLocation>
</comment>
<comment type="developmental stage">
    <text>Elementary body.</text>
</comment>
<comment type="similarity">
    <text evidence="3">Belongs to the PMP outer membrane protein family.</text>
</comment>
<comment type="sequence caution" evidence="3">
    <conflict type="frameshift">
        <sequence resource="EMBL-CDS" id="AAP97948"/>
    </conflict>
</comment>
<comment type="sequence caution" evidence="3">
    <conflict type="frameshift">
        <sequence resource="EMBL-CDS" id="AAP97949"/>
    </conflict>
</comment>
<comment type="sequence caution" evidence="3">
    <conflict type="frameshift">
        <sequence resource="EMBL-CDS" id="BAA98223"/>
    </conflict>
</comment>
<feature type="signal peptide" evidence="1">
    <location>
        <begin position="1"/>
        <end position="24"/>
    </location>
</feature>
<feature type="chain" id="PRO_0000024735" description="Probable outer membrane protein pmp2">
    <location>
        <begin position="25"/>
        <end position="841"/>
    </location>
</feature>
<feature type="domain" description="Autotransporter" evidence="2">
    <location>
        <begin position="537"/>
        <end position="841"/>
    </location>
</feature>
<feature type="sequence conflict" description="In Ref. 4." evidence="3" ref="4">
    <original>N</original>
    <variation>S</variation>
    <location>
        <position position="784"/>
    </location>
</feature>
<name>PMP2_CHLPN</name>
<reference key="1">
    <citation type="journal article" date="1999" name="Am. Heart J.">
        <title>Molecular biology of Chlamydia pneumoniae surface proteins and their role in immunopathogenicity.</title>
        <authorList>
            <person name="Christiansen G."/>
            <person name="Boesen T."/>
            <person name="Hjerno K."/>
            <person name="Daugaard L."/>
            <person name="Mygind P."/>
            <person name="Madsen A.S."/>
            <person name="Knudsen K."/>
            <person name="Falk E."/>
            <person name="Birkelund S."/>
        </authorList>
    </citation>
    <scope>NUCLEOTIDE SEQUENCE [GENOMIC DNA]</scope>
    <source>
        <strain>CWL029 / VR1310</strain>
    </source>
</reference>
<reference key="2">
    <citation type="journal article" date="1999" name="Nat. Genet.">
        <title>Comparative genomes of Chlamydia pneumoniae and C. trachomatis.</title>
        <authorList>
            <person name="Kalman S."/>
            <person name="Mitchell W.P."/>
            <person name="Marathe R."/>
            <person name="Lammel C.J."/>
            <person name="Fan J."/>
            <person name="Hyman R.W."/>
            <person name="Olinger L."/>
            <person name="Grimwood J."/>
            <person name="Davis R.W."/>
            <person name="Stephens R.S."/>
        </authorList>
    </citation>
    <scope>NUCLEOTIDE SEQUENCE [LARGE SCALE GENOMIC DNA]</scope>
    <source>
        <strain>CWL029</strain>
    </source>
</reference>
<reference key="3">
    <citation type="journal article" date="2000" name="Nucleic Acids Res.">
        <title>Genome sequences of Chlamydia trachomatis MoPn and Chlamydia pneumoniae AR39.</title>
        <authorList>
            <person name="Read T.D."/>
            <person name="Brunham R.C."/>
            <person name="Shen C."/>
            <person name="Gill S.R."/>
            <person name="Heidelberg J.F."/>
            <person name="White O."/>
            <person name="Hickey E.K."/>
            <person name="Peterson J.D."/>
            <person name="Utterback T.R."/>
            <person name="Berry K.J."/>
            <person name="Bass S."/>
            <person name="Linher K.D."/>
            <person name="Weidman J.F."/>
            <person name="Khouri H.M."/>
            <person name="Craven B."/>
            <person name="Bowman C."/>
            <person name="Dodson R.J."/>
            <person name="Gwinn M.L."/>
            <person name="Nelson W.C."/>
            <person name="DeBoy R.T."/>
            <person name="Kolonay J.F."/>
            <person name="McClarty G."/>
            <person name="Salzberg S.L."/>
            <person name="Eisen J.A."/>
            <person name="Fraser C.M."/>
        </authorList>
    </citation>
    <scope>NUCLEOTIDE SEQUENCE [LARGE SCALE GENOMIC DNA]</scope>
    <source>
        <strain>AR39</strain>
    </source>
</reference>
<reference key="4">
    <citation type="journal article" date="2000" name="Nucleic Acids Res.">
        <title>Comparison of whole genome sequences of Chlamydia pneumoniae J138 from Japan and CWL029 from USA.</title>
        <authorList>
            <person name="Shirai M."/>
            <person name="Hirakawa H."/>
            <person name="Kimoto M."/>
            <person name="Tabuchi M."/>
            <person name="Kishi F."/>
            <person name="Ouchi K."/>
            <person name="Shiba T."/>
            <person name="Ishii K."/>
            <person name="Hattori M."/>
            <person name="Kuhara S."/>
            <person name="Nakazawa T."/>
        </authorList>
    </citation>
    <scope>NUCLEOTIDE SEQUENCE [LARGE SCALE GENOMIC DNA]</scope>
    <source>
        <strain>J138</strain>
    </source>
</reference>
<reference key="5">
    <citation type="submission" date="2002-05" db="EMBL/GenBank/DDBJ databases">
        <title>The genome sequence of Chlamydia pneumoniae TW183 and comparison with other Chlamydia strains based on whole genome sequence analysis.</title>
        <authorList>
            <person name="Geng M.M."/>
            <person name="Schuhmacher A."/>
            <person name="Muehldorfer I."/>
            <person name="Bensch K.W."/>
            <person name="Schaefer K.P."/>
            <person name="Schneider S."/>
            <person name="Pohl T."/>
            <person name="Essig A."/>
            <person name="Marre R."/>
            <person name="Melchers K."/>
        </authorList>
    </citation>
    <scope>NUCLEOTIDE SEQUENCE [LARGE SCALE GENOMIC DNA]</scope>
    <source>
        <strain>TW-183</strain>
    </source>
</reference>
<evidence type="ECO:0000255" key="1"/>
<evidence type="ECO:0000255" key="2">
    <source>
        <dbReference type="PROSITE-ProRule" id="PRU00556"/>
    </source>
</evidence>
<evidence type="ECO:0000305" key="3"/>
<gene>
    <name type="primary">pmp2</name>
    <name type="synonym">omp7</name>
    <name type="ordered locus">CPn_0013</name>
    <name type="ordered locus">CP_0761</name>
    <name type="ordered locus">CpB0015/CpB0016</name>
</gene>
<organism>
    <name type="scientific">Chlamydia pneumoniae</name>
    <name type="common">Chlamydophila pneumoniae</name>
    <dbReference type="NCBI Taxonomy" id="83558"/>
    <lineage>
        <taxon>Bacteria</taxon>
        <taxon>Pseudomonadati</taxon>
        <taxon>Chlamydiota</taxon>
        <taxon>Chlamydiia</taxon>
        <taxon>Chlamydiales</taxon>
        <taxon>Chlamydiaceae</taxon>
        <taxon>Chlamydia/Chlamydophila group</taxon>
        <taxon>Chlamydia</taxon>
    </lineage>
</organism>
<sequence length="841" mass="89601">MKIPLRFLLISLVPTLSMSNLLGAATTEELSASNSFDGTTSTTSFSSKTSSATDGTNYVFKDSVVIENVPKTGETQSTSCFKNDAAAGDLNFLGGGFSFTFSNIDATTASGAAIGSEAANKTVTLSGFSALSFLKSPASTVTNGLGAINVKGNLSLLDNDKVLIQDNFSTGDGGAINCAGSLKIANNKSLSFIGNSSSTRGGAIHTKNLTLSSGGETLFQGNTAPTAAGKGGAIAIADSGTLSISGDSGDIIFEGNTIGATGTVSHSAIDLGTSAKITALRAAQGHTIYFYDPITVTGSTSVADALNINSPDTGDNKEYTGTIVFSGEKLTEAEAKDEKNRTSKLLQNVAFKNGTVVLKGDVVLSANGFSQDANSKLIMDLGTSLVANTESIELTNLEINIDSLRNGKKIKLSAATAQKDIRIDRPVVLAISDESFYQNGFLNEDHSYDGILELDAGKDIVISADSRSIDAVQSPYGYQGKWTINWSTDDKKATVSWAKQSFNPTAEQEAPLVPNLLWGSFIDVRSFQNFIELGTEGAPYEKRFWVAGISNVLHRSGRENQRKFRHVSGGAVVGASTRMPGGDTLSLGFAQLFARDKDYFMNTNFAKTYAGSLRLQHDASLYSVVSILLGEGGLREILLPYVSKTLPCSFYGQLSYGHTDHRMKTESLPPPPPTLSTDHTSWGGYVWAGELGTRVAVENTSGRGFFQEYTPFVKVQAVYARQDSFVELGAISRDFSDSHLYNLAIPLGIKLEKRFAEQYYHVVAMYSPDVCRSNPKCTTTLLSNQGSWKTKGSNLARQAGIVQASGFRSLGAAAELFGNFGFEWRGSSRSYNVDAGSKIKF</sequence>
<keyword id="KW-0998">Cell outer membrane</keyword>
<keyword id="KW-0134">Cell wall</keyword>
<keyword id="KW-0472">Membrane</keyword>
<keyword id="KW-0964">Secreted</keyword>
<keyword id="KW-0732">Signal</keyword>
<keyword id="KW-0812">Transmembrane</keyword>
<keyword id="KW-1134">Transmembrane beta strand</keyword>
<accession>Q9Z3A1</accession>
<accession>Q9RB73</accession>